<dbReference type="EC" id="2.3.1.286" evidence="3"/>
<dbReference type="EMBL" id="AACD01000129">
    <property type="protein sequence ID" value="EAA62041.1"/>
    <property type="molecule type" value="Genomic_DNA"/>
</dbReference>
<dbReference type="EMBL" id="BN001304">
    <property type="protein sequence ID" value="CBF79427.1"/>
    <property type="molecule type" value="Genomic_DNA"/>
</dbReference>
<dbReference type="RefSeq" id="XP_680730.1">
    <property type="nucleotide sequence ID" value="XM_675638.1"/>
</dbReference>
<dbReference type="SMR" id="Q5AW69"/>
<dbReference type="FunCoup" id="Q5AW69">
    <property type="interactions" value="441"/>
</dbReference>
<dbReference type="STRING" id="227321.Q5AW69"/>
<dbReference type="EnsemblFungi" id="CBF79427">
    <property type="protein sequence ID" value="CBF79427"/>
    <property type="gene ID" value="ANIA_07461"/>
</dbReference>
<dbReference type="KEGG" id="ani:ANIA_07461"/>
<dbReference type="VEuPathDB" id="FungiDB:AN7461"/>
<dbReference type="eggNOG" id="KOG2682">
    <property type="taxonomic scope" value="Eukaryota"/>
</dbReference>
<dbReference type="HOGENOM" id="CLU_023643_0_0_1"/>
<dbReference type="InParanoid" id="Q5AW69"/>
<dbReference type="OMA" id="ATHSCID"/>
<dbReference type="OrthoDB" id="420264at2759"/>
<dbReference type="Proteomes" id="UP000000560">
    <property type="component" value="Chromosome IV"/>
</dbReference>
<dbReference type="GO" id="GO:0005737">
    <property type="term" value="C:cytoplasm"/>
    <property type="evidence" value="ECO:0007669"/>
    <property type="project" value="UniProtKB-SubCell"/>
</dbReference>
<dbReference type="GO" id="GO:0005634">
    <property type="term" value="C:nucleus"/>
    <property type="evidence" value="ECO:0000318"/>
    <property type="project" value="GO_Central"/>
</dbReference>
<dbReference type="GO" id="GO:0017136">
    <property type="term" value="F:histone deacetylase activity, NAD-dependent"/>
    <property type="evidence" value="ECO:0000318"/>
    <property type="project" value="GO_Central"/>
</dbReference>
<dbReference type="GO" id="GO:0046872">
    <property type="term" value="F:metal ion binding"/>
    <property type="evidence" value="ECO:0007669"/>
    <property type="project" value="UniProtKB-KW"/>
</dbReference>
<dbReference type="GO" id="GO:0070403">
    <property type="term" value="F:NAD+ binding"/>
    <property type="evidence" value="ECO:0000318"/>
    <property type="project" value="GO_Central"/>
</dbReference>
<dbReference type="GO" id="GO:0000183">
    <property type="term" value="P:rDNA heterochromatin formation"/>
    <property type="evidence" value="ECO:0000318"/>
    <property type="project" value="GO_Central"/>
</dbReference>
<dbReference type="CDD" id="cd01408">
    <property type="entry name" value="SIRT1"/>
    <property type="match status" value="1"/>
</dbReference>
<dbReference type="Gene3D" id="3.30.1600.10">
    <property type="entry name" value="SIR2/SIRT2 'Small Domain"/>
    <property type="match status" value="1"/>
</dbReference>
<dbReference type="Gene3D" id="3.40.50.1220">
    <property type="entry name" value="TPP-binding domain"/>
    <property type="match status" value="1"/>
</dbReference>
<dbReference type="InterPro" id="IPR029035">
    <property type="entry name" value="DHS-like_NAD/FAD-binding_dom"/>
</dbReference>
<dbReference type="InterPro" id="IPR050134">
    <property type="entry name" value="NAD-dep_sirtuin_deacylases"/>
</dbReference>
<dbReference type="InterPro" id="IPR003000">
    <property type="entry name" value="Sirtuin"/>
</dbReference>
<dbReference type="InterPro" id="IPR026591">
    <property type="entry name" value="Sirtuin_cat_small_dom_sf"/>
</dbReference>
<dbReference type="InterPro" id="IPR017328">
    <property type="entry name" value="Sirtuin_class_I"/>
</dbReference>
<dbReference type="InterPro" id="IPR026590">
    <property type="entry name" value="Ssirtuin_cat_dom"/>
</dbReference>
<dbReference type="PANTHER" id="PTHR11085:SF6">
    <property type="entry name" value="NAD-DEPENDENT PROTEIN DEACETYLASE SIRTUIN-2"/>
    <property type="match status" value="1"/>
</dbReference>
<dbReference type="PANTHER" id="PTHR11085">
    <property type="entry name" value="NAD-DEPENDENT PROTEIN DEACYLASE SIRTUIN-5, MITOCHONDRIAL-RELATED"/>
    <property type="match status" value="1"/>
</dbReference>
<dbReference type="Pfam" id="PF02146">
    <property type="entry name" value="SIR2"/>
    <property type="match status" value="1"/>
</dbReference>
<dbReference type="PIRSF" id="PIRSF037938">
    <property type="entry name" value="SIR2_euk"/>
    <property type="match status" value="1"/>
</dbReference>
<dbReference type="SUPFAM" id="SSF52467">
    <property type="entry name" value="DHS-like NAD/FAD-binding domain"/>
    <property type="match status" value="1"/>
</dbReference>
<dbReference type="PROSITE" id="PS50305">
    <property type="entry name" value="SIRTUIN"/>
    <property type="match status" value="1"/>
</dbReference>
<protein>
    <recommendedName>
        <fullName>NAD-dependent protein deacetylase hst2-1</fullName>
        <ecNumber evidence="3">2.3.1.286</ecNumber>
    </recommendedName>
    <alternativeName>
        <fullName>Homologous to SIR2 protein 2-1</fullName>
    </alternativeName>
    <alternativeName>
        <fullName>Regulatory protein SIR2 homolog 2-1</fullName>
    </alternativeName>
</protein>
<keyword id="KW-0175">Coiled coil</keyword>
<keyword id="KW-0963">Cytoplasm</keyword>
<keyword id="KW-0479">Metal-binding</keyword>
<keyword id="KW-0520">NAD</keyword>
<keyword id="KW-0539">Nucleus</keyword>
<keyword id="KW-1185">Reference proteome</keyword>
<keyword id="KW-0678">Repressor</keyword>
<keyword id="KW-0804">Transcription</keyword>
<keyword id="KW-0805">Transcription regulation</keyword>
<keyword id="KW-0808">Transferase</keyword>
<keyword id="KW-0862">Zinc</keyword>
<feature type="chain" id="PRO_0000417410" description="NAD-dependent protein deacetylase hst2-1">
    <location>
        <begin position="1"/>
        <end position="361"/>
    </location>
</feature>
<feature type="domain" description="Deacetylase sirtuin-type" evidence="3">
    <location>
        <begin position="16"/>
        <end position="276"/>
    </location>
</feature>
<feature type="region of interest" description="Disordered" evidence="4">
    <location>
        <begin position="335"/>
        <end position="361"/>
    </location>
</feature>
<feature type="coiled-coil region" evidence="2">
    <location>
        <begin position="294"/>
        <end position="328"/>
    </location>
</feature>
<feature type="active site" description="Proton acceptor" evidence="3">
    <location>
        <position position="146"/>
    </location>
</feature>
<feature type="binding site" evidence="1">
    <location>
        <begin position="43"/>
        <end position="63"/>
    </location>
    <ligand>
        <name>NAD(+)</name>
        <dbReference type="ChEBI" id="CHEBI:57540"/>
    </ligand>
</feature>
<feature type="binding site" evidence="1">
    <location>
        <begin position="126"/>
        <end position="129"/>
    </location>
    <ligand>
        <name>NAD(+)</name>
        <dbReference type="ChEBI" id="CHEBI:57540"/>
    </ligand>
</feature>
<feature type="binding site" evidence="3">
    <location>
        <position position="154"/>
    </location>
    <ligand>
        <name>Zn(2+)</name>
        <dbReference type="ChEBI" id="CHEBI:29105"/>
    </ligand>
</feature>
<feature type="binding site" evidence="3">
    <location>
        <position position="157"/>
    </location>
    <ligand>
        <name>Zn(2+)</name>
        <dbReference type="ChEBI" id="CHEBI:29105"/>
    </ligand>
</feature>
<feature type="binding site" evidence="3">
    <location>
        <position position="178"/>
    </location>
    <ligand>
        <name>Zn(2+)</name>
        <dbReference type="ChEBI" id="CHEBI:29105"/>
    </ligand>
</feature>
<feature type="binding site" evidence="3">
    <location>
        <position position="181"/>
    </location>
    <ligand>
        <name>Zn(2+)</name>
        <dbReference type="ChEBI" id="CHEBI:29105"/>
    </ligand>
</feature>
<feature type="binding site" evidence="1">
    <location>
        <begin position="217"/>
        <end position="219"/>
    </location>
    <ligand>
        <name>NAD(+)</name>
        <dbReference type="ChEBI" id="CHEBI:57540"/>
    </ligand>
</feature>
<feature type="binding site" evidence="1">
    <location>
        <begin position="242"/>
        <end position="244"/>
    </location>
    <ligand>
        <name>NAD(+)</name>
        <dbReference type="ChEBI" id="CHEBI:57540"/>
    </ligand>
</feature>
<feature type="binding site" evidence="1">
    <location>
        <position position="262"/>
    </location>
    <ligand>
        <name>NAD(+)</name>
        <dbReference type="ChEBI" id="CHEBI:57540"/>
    </ligand>
</feature>
<proteinExistence type="inferred from homology"/>
<sequence length="361" mass="40014">MGNESSTLVDEKTPPSVLEARTVEAVAKYVKEKPVRRVVVMVGAGISTAAGIPDFRSPDTGIYANLVHLDLPDPEAVFDISFFRQNPKPFYALARELAPGQYRPTLAHSFVKLLYDKGKLLKHFTQNIDCLERLAGVPGDMIIEAHGSFATQRCIECKTAYPDDLMKEAIAKGEVPNCAECQGLVKPDIVFFGEALPSAFFDNRTLPETADLCIVMGTSLSVQPFASLPSFVADGVPRVLINRERVGGLGSRPDDVLILDDCDNGVRKLARALGWEDELERLWEEANPNQKSREEELATPRTREERLENEISRLTAEIDKTLKISDAYQKRVRERLEGEPLSSPESNGTGLAHVFPHLARR</sequence>
<gene>
    <name type="ORF">AN7461</name>
</gene>
<accession>Q5AW69</accession>
<accession>C8VBD7</accession>
<evidence type="ECO:0000250" key="1"/>
<evidence type="ECO:0000255" key="2"/>
<evidence type="ECO:0000255" key="3">
    <source>
        <dbReference type="PROSITE-ProRule" id="PRU00236"/>
    </source>
</evidence>
<evidence type="ECO:0000256" key="4">
    <source>
        <dbReference type="SAM" id="MobiDB-lite"/>
    </source>
</evidence>
<evidence type="ECO:0000305" key="5"/>
<organism>
    <name type="scientific">Emericella nidulans (strain FGSC A4 / ATCC 38163 / CBS 112.46 / NRRL 194 / M139)</name>
    <name type="common">Aspergillus nidulans</name>
    <dbReference type="NCBI Taxonomy" id="227321"/>
    <lineage>
        <taxon>Eukaryota</taxon>
        <taxon>Fungi</taxon>
        <taxon>Dikarya</taxon>
        <taxon>Ascomycota</taxon>
        <taxon>Pezizomycotina</taxon>
        <taxon>Eurotiomycetes</taxon>
        <taxon>Eurotiomycetidae</taxon>
        <taxon>Eurotiales</taxon>
        <taxon>Aspergillaceae</taxon>
        <taxon>Aspergillus</taxon>
        <taxon>Aspergillus subgen. Nidulantes</taxon>
    </lineage>
</organism>
<name>HST21_EMENI</name>
<reference key="1">
    <citation type="journal article" date="2005" name="Nature">
        <title>Sequencing of Aspergillus nidulans and comparative analysis with A. fumigatus and A. oryzae.</title>
        <authorList>
            <person name="Galagan J.E."/>
            <person name="Calvo S.E."/>
            <person name="Cuomo C."/>
            <person name="Ma L.-J."/>
            <person name="Wortman J.R."/>
            <person name="Batzoglou S."/>
            <person name="Lee S.-I."/>
            <person name="Bastuerkmen M."/>
            <person name="Spevak C.C."/>
            <person name="Clutterbuck J."/>
            <person name="Kapitonov V."/>
            <person name="Jurka J."/>
            <person name="Scazzocchio C."/>
            <person name="Farman M.L."/>
            <person name="Butler J."/>
            <person name="Purcell S."/>
            <person name="Harris S."/>
            <person name="Braus G.H."/>
            <person name="Draht O."/>
            <person name="Busch S."/>
            <person name="D'Enfert C."/>
            <person name="Bouchier C."/>
            <person name="Goldman G.H."/>
            <person name="Bell-Pedersen D."/>
            <person name="Griffiths-Jones S."/>
            <person name="Doonan J.H."/>
            <person name="Yu J."/>
            <person name="Vienken K."/>
            <person name="Pain A."/>
            <person name="Freitag M."/>
            <person name="Selker E.U."/>
            <person name="Archer D.B."/>
            <person name="Penalva M.A."/>
            <person name="Oakley B.R."/>
            <person name="Momany M."/>
            <person name="Tanaka T."/>
            <person name="Kumagai T."/>
            <person name="Asai K."/>
            <person name="Machida M."/>
            <person name="Nierman W.C."/>
            <person name="Denning D.W."/>
            <person name="Caddick M.X."/>
            <person name="Hynes M."/>
            <person name="Paoletti M."/>
            <person name="Fischer R."/>
            <person name="Miller B.L."/>
            <person name="Dyer P.S."/>
            <person name="Sachs M.S."/>
            <person name="Osmani S.A."/>
            <person name="Birren B.W."/>
        </authorList>
    </citation>
    <scope>NUCLEOTIDE SEQUENCE [LARGE SCALE GENOMIC DNA]</scope>
    <source>
        <strain>FGSC A4 / ATCC 38163 / CBS 112.46 / NRRL 194 / M139</strain>
    </source>
</reference>
<reference key="2">
    <citation type="journal article" date="2009" name="Fungal Genet. Biol.">
        <title>The 2008 update of the Aspergillus nidulans genome annotation: a community effort.</title>
        <authorList>
            <person name="Wortman J.R."/>
            <person name="Gilsenan J.M."/>
            <person name="Joardar V."/>
            <person name="Deegan J."/>
            <person name="Clutterbuck J."/>
            <person name="Andersen M.R."/>
            <person name="Archer D."/>
            <person name="Bencina M."/>
            <person name="Braus G."/>
            <person name="Coutinho P."/>
            <person name="von Dohren H."/>
            <person name="Doonan J."/>
            <person name="Driessen A.J."/>
            <person name="Durek P."/>
            <person name="Espeso E."/>
            <person name="Fekete E."/>
            <person name="Flipphi M."/>
            <person name="Estrada C.G."/>
            <person name="Geysens S."/>
            <person name="Goldman G."/>
            <person name="de Groot P.W."/>
            <person name="Hansen K."/>
            <person name="Harris S.D."/>
            <person name="Heinekamp T."/>
            <person name="Helmstaedt K."/>
            <person name="Henrissat B."/>
            <person name="Hofmann G."/>
            <person name="Homan T."/>
            <person name="Horio T."/>
            <person name="Horiuchi H."/>
            <person name="James S."/>
            <person name="Jones M."/>
            <person name="Karaffa L."/>
            <person name="Karanyi Z."/>
            <person name="Kato M."/>
            <person name="Keller N."/>
            <person name="Kelly D.E."/>
            <person name="Kiel J.A."/>
            <person name="Kim J.M."/>
            <person name="van der Klei I.J."/>
            <person name="Klis F.M."/>
            <person name="Kovalchuk A."/>
            <person name="Krasevec N."/>
            <person name="Kubicek C.P."/>
            <person name="Liu B."/>
            <person name="Maccabe A."/>
            <person name="Meyer V."/>
            <person name="Mirabito P."/>
            <person name="Miskei M."/>
            <person name="Mos M."/>
            <person name="Mullins J."/>
            <person name="Nelson D.R."/>
            <person name="Nielsen J."/>
            <person name="Oakley B.R."/>
            <person name="Osmani S.A."/>
            <person name="Pakula T."/>
            <person name="Paszewski A."/>
            <person name="Paulsen I."/>
            <person name="Pilsyk S."/>
            <person name="Pocsi I."/>
            <person name="Punt P.J."/>
            <person name="Ram A.F."/>
            <person name="Ren Q."/>
            <person name="Robellet X."/>
            <person name="Robson G."/>
            <person name="Seiboth B."/>
            <person name="van Solingen P."/>
            <person name="Specht T."/>
            <person name="Sun J."/>
            <person name="Taheri-Talesh N."/>
            <person name="Takeshita N."/>
            <person name="Ussery D."/>
            <person name="vanKuyk P.A."/>
            <person name="Visser H."/>
            <person name="van de Vondervoort P.J."/>
            <person name="de Vries R.P."/>
            <person name="Walton J."/>
            <person name="Xiang X."/>
            <person name="Xiong Y."/>
            <person name="Zeng A.P."/>
            <person name="Brandt B.W."/>
            <person name="Cornell M.J."/>
            <person name="van den Hondel C.A."/>
            <person name="Visser J."/>
            <person name="Oliver S.G."/>
            <person name="Turner G."/>
        </authorList>
    </citation>
    <scope>GENOME REANNOTATION</scope>
    <source>
        <strain>FGSC A4 / ATCC 38163 / CBS 112.46 / NRRL 194 / M139</strain>
    </source>
</reference>
<comment type="function">
    <text evidence="1">NAD-dependent histone deacetylase, which could function in telomeric silencing, cell cycle progression and chromosome stability.</text>
</comment>
<comment type="catalytic activity">
    <reaction evidence="3">
        <text>N(6)-acetyl-L-lysyl-[protein] + NAD(+) + H2O = 2''-O-acetyl-ADP-D-ribose + nicotinamide + L-lysyl-[protein]</text>
        <dbReference type="Rhea" id="RHEA:43636"/>
        <dbReference type="Rhea" id="RHEA-COMP:9752"/>
        <dbReference type="Rhea" id="RHEA-COMP:10731"/>
        <dbReference type="ChEBI" id="CHEBI:15377"/>
        <dbReference type="ChEBI" id="CHEBI:17154"/>
        <dbReference type="ChEBI" id="CHEBI:29969"/>
        <dbReference type="ChEBI" id="CHEBI:57540"/>
        <dbReference type="ChEBI" id="CHEBI:61930"/>
        <dbReference type="ChEBI" id="CHEBI:83767"/>
        <dbReference type="EC" id="2.3.1.286"/>
    </reaction>
</comment>
<comment type="cofactor">
    <cofactor evidence="1">
        <name>Zn(2+)</name>
        <dbReference type="ChEBI" id="CHEBI:29105"/>
    </cofactor>
    <text evidence="1">Binds 1 zinc ion per subunit.</text>
</comment>
<comment type="subcellular location">
    <subcellularLocation>
        <location evidence="1">Cytoplasm</location>
    </subcellularLocation>
    <subcellularLocation>
        <location evidence="1">Nucleus</location>
    </subcellularLocation>
</comment>
<comment type="similarity">
    <text evidence="5">Belongs to the sirtuin family. Class I subfamily.</text>
</comment>